<proteinExistence type="inferred from homology"/>
<protein>
    <recommendedName>
        <fullName evidence="1">Glycerol-3-phosphate dehydrogenase [NAD(P)+]</fullName>
        <ecNumber evidence="1">1.1.1.94</ecNumber>
    </recommendedName>
    <alternativeName>
        <fullName evidence="1">NAD(P)(+)-dependent glycerol-3-phosphate dehydrogenase</fullName>
    </alternativeName>
    <alternativeName>
        <fullName evidence="1">NAD(P)H-dependent dihydroxyacetone-phosphate reductase</fullName>
    </alternativeName>
</protein>
<keyword id="KW-0963">Cytoplasm</keyword>
<keyword id="KW-0444">Lipid biosynthesis</keyword>
<keyword id="KW-0443">Lipid metabolism</keyword>
<keyword id="KW-0520">NAD</keyword>
<keyword id="KW-0521">NADP</keyword>
<keyword id="KW-0547">Nucleotide-binding</keyword>
<keyword id="KW-0560">Oxidoreductase</keyword>
<keyword id="KW-0594">Phospholipid biosynthesis</keyword>
<keyword id="KW-1208">Phospholipid metabolism</keyword>
<dbReference type="EC" id="1.1.1.94" evidence="1"/>
<dbReference type="EMBL" id="CP000970">
    <property type="protein sequence ID" value="ACB19032.1"/>
    <property type="molecule type" value="Genomic_DNA"/>
</dbReference>
<dbReference type="RefSeq" id="WP_001076194.1">
    <property type="nucleotide sequence ID" value="NC_010498.1"/>
</dbReference>
<dbReference type="SMR" id="B1LK47"/>
<dbReference type="GeneID" id="93778322"/>
<dbReference type="KEGG" id="ecm:EcSMS35_3945"/>
<dbReference type="HOGENOM" id="CLU_033449_0_2_6"/>
<dbReference type="UniPathway" id="UPA00940"/>
<dbReference type="Proteomes" id="UP000007011">
    <property type="component" value="Chromosome"/>
</dbReference>
<dbReference type="GO" id="GO:0005829">
    <property type="term" value="C:cytosol"/>
    <property type="evidence" value="ECO:0007669"/>
    <property type="project" value="TreeGrafter"/>
</dbReference>
<dbReference type="GO" id="GO:0047952">
    <property type="term" value="F:glycerol-3-phosphate dehydrogenase [NAD(P)+] activity"/>
    <property type="evidence" value="ECO:0007669"/>
    <property type="project" value="UniProtKB-UniRule"/>
</dbReference>
<dbReference type="GO" id="GO:0051287">
    <property type="term" value="F:NAD binding"/>
    <property type="evidence" value="ECO:0007669"/>
    <property type="project" value="InterPro"/>
</dbReference>
<dbReference type="GO" id="GO:0005975">
    <property type="term" value="P:carbohydrate metabolic process"/>
    <property type="evidence" value="ECO:0007669"/>
    <property type="project" value="InterPro"/>
</dbReference>
<dbReference type="GO" id="GO:0046167">
    <property type="term" value="P:glycerol-3-phosphate biosynthetic process"/>
    <property type="evidence" value="ECO:0007669"/>
    <property type="project" value="UniProtKB-UniRule"/>
</dbReference>
<dbReference type="GO" id="GO:0046168">
    <property type="term" value="P:glycerol-3-phosphate catabolic process"/>
    <property type="evidence" value="ECO:0007669"/>
    <property type="project" value="InterPro"/>
</dbReference>
<dbReference type="GO" id="GO:0046474">
    <property type="term" value="P:glycerophospholipid biosynthetic process"/>
    <property type="evidence" value="ECO:0007669"/>
    <property type="project" value="TreeGrafter"/>
</dbReference>
<dbReference type="FunFam" id="1.10.1040.10:FF:000001">
    <property type="entry name" value="Glycerol-3-phosphate dehydrogenase [NAD(P)+]"/>
    <property type="match status" value="1"/>
</dbReference>
<dbReference type="FunFam" id="3.40.50.720:FF:000019">
    <property type="entry name" value="Glycerol-3-phosphate dehydrogenase [NAD(P)+]"/>
    <property type="match status" value="1"/>
</dbReference>
<dbReference type="Gene3D" id="1.10.1040.10">
    <property type="entry name" value="N-(1-d-carboxylethyl)-l-norvaline Dehydrogenase, domain 2"/>
    <property type="match status" value="1"/>
</dbReference>
<dbReference type="Gene3D" id="3.40.50.720">
    <property type="entry name" value="NAD(P)-binding Rossmann-like Domain"/>
    <property type="match status" value="1"/>
</dbReference>
<dbReference type="HAMAP" id="MF_00394">
    <property type="entry name" value="NAD_Glyc3P_dehydrog"/>
    <property type="match status" value="1"/>
</dbReference>
<dbReference type="InterPro" id="IPR008927">
    <property type="entry name" value="6-PGluconate_DH-like_C_sf"/>
</dbReference>
<dbReference type="InterPro" id="IPR013328">
    <property type="entry name" value="6PGD_dom2"/>
</dbReference>
<dbReference type="InterPro" id="IPR006168">
    <property type="entry name" value="G3P_DH_NAD-dep"/>
</dbReference>
<dbReference type="InterPro" id="IPR006109">
    <property type="entry name" value="G3P_DH_NAD-dep_C"/>
</dbReference>
<dbReference type="InterPro" id="IPR011128">
    <property type="entry name" value="G3P_DH_NAD-dep_N"/>
</dbReference>
<dbReference type="InterPro" id="IPR036291">
    <property type="entry name" value="NAD(P)-bd_dom_sf"/>
</dbReference>
<dbReference type="NCBIfam" id="NF000939">
    <property type="entry name" value="PRK00094.1-1"/>
    <property type="match status" value="1"/>
</dbReference>
<dbReference type="NCBIfam" id="NF000940">
    <property type="entry name" value="PRK00094.1-2"/>
    <property type="match status" value="1"/>
</dbReference>
<dbReference type="NCBIfam" id="NF000942">
    <property type="entry name" value="PRK00094.1-4"/>
    <property type="match status" value="1"/>
</dbReference>
<dbReference type="PANTHER" id="PTHR11728">
    <property type="entry name" value="GLYCEROL-3-PHOSPHATE DEHYDROGENASE"/>
    <property type="match status" value="1"/>
</dbReference>
<dbReference type="PANTHER" id="PTHR11728:SF1">
    <property type="entry name" value="GLYCEROL-3-PHOSPHATE DEHYDROGENASE [NAD(+)] 2, CHLOROPLASTIC"/>
    <property type="match status" value="1"/>
</dbReference>
<dbReference type="Pfam" id="PF07479">
    <property type="entry name" value="NAD_Gly3P_dh_C"/>
    <property type="match status" value="1"/>
</dbReference>
<dbReference type="Pfam" id="PF01210">
    <property type="entry name" value="NAD_Gly3P_dh_N"/>
    <property type="match status" value="1"/>
</dbReference>
<dbReference type="PIRSF" id="PIRSF000114">
    <property type="entry name" value="Glycerol-3-P_dh"/>
    <property type="match status" value="1"/>
</dbReference>
<dbReference type="PRINTS" id="PR00077">
    <property type="entry name" value="GPDHDRGNASE"/>
</dbReference>
<dbReference type="SUPFAM" id="SSF48179">
    <property type="entry name" value="6-phosphogluconate dehydrogenase C-terminal domain-like"/>
    <property type="match status" value="1"/>
</dbReference>
<dbReference type="SUPFAM" id="SSF51735">
    <property type="entry name" value="NAD(P)-binding Rossmann-fold domains"/>
    <property type="match status" value="1"/>
</dbReference>
<dbReference type="PROSITE" id="PS00957">
    <property type="entry name" value="NAD_G3PDH"/>
    <property type="match status" value="1"/>
</dbReference>
<name>GPDA_ECOSM</name>
<evidence type="ECO:0000255" key="1">
    <source>
        <dbReference type="HAMAP-Rule" id="MF_00394"/>
    </source>
</evidence>
<organism>
    <name type="scientific">Escherichia coli (strain SMS-3-5 / SECEC)</name>
    <dbReference type="NCBI Taxonomy" id="439855"/>
    <lineage>
        <taxon>Bacteria</taxon>
        <taxon>Pseudomonadati</taxon>
        <taxon>Pseudomonadota</taxon>
        <taxon>Gammaproteobacteria</taxon>
        <taxon>Enterobacterales</taxon>
        <taxon>Enterobacteriaceae</taxon>
        <taxon>Escherichia</taxon>
    </lineage>
</organism>
<accession>B1LK47</accession>
<feature type="chain" id="PRO_1000190142" description="Glycerol-3-phosphate dehydrogenase [NAD(P)+]">
    <location>
        <begin position="1"/>
        <end position="339"/>
    </location>
</feature>
<feature type="active site" description="Proton acceptor" evidence="1">
    <location>
        <position position="195"/>
    </location>
</feature>
<feature type="binding site" evidence="1">
    <location>
        <position position="15"/>
    </location>
    <ligand>
        <name>NADPH</name>
        <dbReference type="ChEBI" id="CHEBI:57783"/>
    </ligand>
</feature>
<feature type="binding site" evidence="1">
    <location>
        <position position="16"/>
    </location>
    <ligand>
        <name>NADPH</name>
        <dbReference type="ChEBI" id="CHEBI:57783"/>
    </ligand>
</feature>
<feature type="binding site" evidence="1">
    <location>
        <position position="36"/>
    </location>
    <ligand>
        <name>NADPH</name>
        <dbReference type="ChEBI" id="CHEBI:57783"/>
    </ligand>
</feature>
<feature type="binding site" evidence="1">
    <location>
        <position position="110"/>
    </location>
    <ligand>
        <name>NADPH</name>
        <dbReference type="ChEBI" id="CHEBI:57783"/>
    </ligand>
</feature>
<feature type="binding site" evidence="1">
    <location>
        <position position="110"/>
    </location>
    <ligand>
        <name>sn-glycerol 3-phosphate</name>
        <dbReference type="ChEBI" id="CHEBI:57597"/>
    </ligand>
</feature>
<feature type="binding site" evidence="1">
    <location>
        <position position="139"/>
    </location>
    <ligand>
        <name>sn-glycerol 3-phosphate</name>
        <dbReference type="ChEBI" id="CHEBI:57597"/>
    </ligand>
</feature>
<feature type="binding site" evidence="1">
    <location>
        <position position="141"/>
    </location>
    <ligand>
        <name>sn-glycerol 3-phosphate</name>
        <dbReference type="ChEBI" id="CHEBI:57597"/>
    </ligand>
</feature>
<feature type="binding site" evidence="1">
    <location>
        <position position="143"/>
    </location>
    <ligand>
        <name>NADPH</name>
        <dbReference type="ChEBI" id="CHEBI:57783"/>
    </ligand>
</feature>
<feature type="binding site" evidence="1">
    <location>
        <position position="195"/>
    </location>
    <ligand>
        <name>sn-glycerol 3-phosphate</name>
        <dbReference type="ChEBI" id="CHEBI:57597"/>
    </ligand>
</feature>
<feature type="binding site" evidence="1">
    <location>
        <position position="248"/>
    </location>
    <ligand>
        <name>sn-glycerol 3-phosphate</name>
        <dbReference type="ChEBI" id="CHEBI:57597"/>
    </ligand>
</feature>
<feature type="binding site" evidence="1">
    <location>
        <position position="258"/>
    </location>
    <ligand>
        <name>sn-glycerol 3-phosphate</name>
        <dbReference type="ChEBI" id="CHEBI:57597"/>
    </ligand>
</feature>
<feature type="binding site" evidence="1">
    <location>
        <position position="259"/>
    </location>
    <ligand>
        <name>NADPH</name>
        <dbReference type="ChEBI" id="CHEBI:57783"/>
    </ligand>
</feature>
<feature type="binding site" evidence="1">
    <location>
        <position position="259"/>
    </location>
    <ligand>
        <name>sn-glycerol 3-phosphate</name>
        <dbReference type="ChEBI" id="CHEBI:57597"/>
    </ligand>
</feature>
<feature type="binding site" evidence="1">
    <location>
        <position position="260"/>
    </location>
    <ligand>
        <name>sn-glycerol 3-phosphate</name>
        <dbReference type="ChEBI" id="CHEBI:57597"/>
    </ligand>
</feature>
<feature type="binding site" evidence="1">
    <location>
        <position position="283"/>
    </location>
    <ligand>
        <name>NADPH</name>
        <dbReference type="ChEBI" id="CHEBI:57783"/>
    </ligand>
</feature>
<feature type="binding site" evidence="1">
    <location>
        <position position="285"/>
    </location>
    <ligand>
        <name>NADPH</name>
        <dbReference type="ChEBI" id="CHEBI:57783"/>
    </ligand>
</feature>
<gene>
    <name evidence="1" type="primary">gpsA</name>
    <name type="ordered locus">EcSMS35_3945</name>
</gene>
<sequence>MNQRNASMTVIGAGSYGTALAITLARNGHEVVLWGHDPEHIATLERDRCNAAFLPDVPFPDTLHLESDLATALAASRNILVVVPSHVFGEVLRQIKPLMRPDARLVWATKGLEAETGRLLQDVAREALGDQIPLAVISGPTFAKELAAGLPTAISLASTDQTFADDLQQLLHCGKSFRVYSNPDFIGVQLGGAVKNVIAIGAGMSDGIGFGANARTALITRGLAEMSRLGAALGADPATFMGMAGLGDLVLTCTDNQSRNRRFGMMLGQGMDVQSAQEKIGQVVEGYRNTKEVRELAHRFGVEMPITEEIYQVLYCGKNAREAALTLLGRARKDERSSH</sequence>
<reference key="1">
    <citation type="journal article" date="2008" name="J. Bacteriol.">
        <title>Insights into the environmental resistance gene pool from the genome sequence of the multidrug-resistant environmental isolate Escherichia coli SMS-3-5.</title>
        <authorList>
            <person name="Fricke W.F."/>
            <person name="Wright M.S."/>
            <person name="Lindell A.H."/>
            <person name="Harkins D.M."/>
            <person name="Baker-Austin C."/>
            <person name="Ravel J."/>
            <person name="Stepanauskas R."/>
        </authorList>
    </citation>
    <scope>NUCLEOTIDE SEQUENCE [LARGE SCALE GENOMIC DNA]</scope>
    <source>
        <strain>SMS-3-5 / SECEC</strain>
    </source>
</reference>
<comment type="function">
    <text evidence="1">Catalyzes the reduction of the glycolytic intermediate dihydroxyacetone phosphate (DHAP) to sn-glycerol 3-phosphate (G3P), the key precursor for phospholipid synthesis.</text>
</comment>
<comment type="catalytic activity">
    <reaction evidence="1">
        <text>sn-glycerol 3-phosphate + NAD(+) = dihydroxyacetone phosphate + NADH + H(+)</text>
        <dbReference type="Rhea" id="RHEA:11092"/>
        <dbReference type="ChEBI" id="CHEBI:15378"/>
        <dbReference type="ChEBI" id="CHEBI:57540"/>
        <dbReference type="ChEBI" id="CHEBI:57597"/>
        <dbReference type="ChEBI" id="CHEBI:57642"/>
        <dbReference type="ChEBI" id="CHEBI:57945"/>
        <dbReference type="EC" id="1.1.1.94"/>
    </reaction>
    <physiologicalReaction direction="right-to-left" evidence="1">
        <dbReference type="Rhea" id="RHEA:11094"/>
    </physiologicalReaction>
</comment>
<comment type="catalytic activity">
    <reaction evidence="1">
        <text>sn-glycerol 3-phosphate + NADP(+) = dihydroxyacetone phosphate + NADPH + H(+)</text>
        <dbReference type="Rhea" id="RHEA:11096"/>
        <dbReference type="ChEBI" id="CHEBI:15378"/>
        <dbReference type="ChEBI" id="CHEBI:57597"/>
        <dbReference type="ChEBI" id="CHEBI:57642"/>
        <dbReference type="ChEBI" id="CHEBI:57783"/>
        <dbReference type="ChEBI" id="CHEBI:58349"/>
        <dbReference type="EC" id="1.1.1.94"/>
    </reaction>
    <physiologicalReaction direction="right-to-left" evidence="1">
        <dbReference type="Rhea" id="RHEA:11098"/>
    </physiologicalReaction>
</comment>
<comment type="pathway">
    <text evidence="1">Membrane lipid metabolism; glycerophospholipid metabolism.</text>
</comment>
<comment type="subcellular location">
    <subcellularLocation>
        <location evidence="1">Cytoplasm</location>
    </subcellularLocation>
</comment>
<comment type="similarity">
    <text evidence="1">Belongs to the NAD-dependent glycerol-3-phosphate dehydrogenase family.</text>
</comment>